<accession>Q0SZY9</accession>
<evidence type="ECO:0000255" key="1">
    <source>
        <dbReference type="HAMAP-Rule" id="MF_01342"/>
    </source>
</evidence>
<evidence type="ECO:0000305" key="2"/>
<dbReference type="EMBL" id="CP000266">
    <property type="protein sequence ID" value="ABF05376.1"/>
    <property type="molecule type" value="Genomic_DNA"/>
</dbReference>
<dbReference type="RefSeq" id="WP_000941212.1">
    <property type="nucleotide sequence ID" value="NC_008258.1"/>
</dbReference>
<dbReference type="SMR" id="Q0SZY9"/>
<dbReference type="GeneID" id="93778674"/>
<dbReference type="KEGG" id="sfv:SFV_3333"/>
<dbReference type="HOGENOM" id="CLU_078858_2_1_6"/>
<dbReference type="Proteomes" id="UP000000659">
    <property type="component" value="Chromosome"/>
</dbReference>
<dbReference type="GO" id="GO:0022625">
    <property type="term" value="C:cytosolic large ribosomal subunit"/>
    <property type="evidence" value="ECO:0007669"/>
    <property type="project" value="TreeGrafter"/>
</dbReference>
<dbReference type="GO" id="GO:0019843">
    <property type="term" value="F:rRNA binding"/>
    <property type="evidence" value="ECO:0007669"/>
    <property type="project" value="UniProtKB-UniRule"/>
</dbReference>
<dbReference type="GO" id="GO:0003735">
    <property type="term" value="F:structural constituent of ribosome"/>
    <property type="evidence" value="ECO:0007669"/>
    <property type="project" value="InterPro"/>
</dbReference>
<dbReference type="GO" id="GO:0000049">
    <property type="term" value="F:tRNA binding"/>
    <property type="evidence" value="ECO:0007669"/>
    <property type="project" value="UniProtKB-KW"/>
</dbReference>
<dbReference type="GO" id="GO:0006412">
    <property type="term" value="P:translation"/>
    <property type="evidence" value="ECO:0007669"/>
    <property type="project" value="UniProtKB-UniRule"/>
</dbReference>
<dbReference type="CDD" id="cd01433">
    <property type="entry name" value="Ribosomal_L16_L10e"/>
    <property type="match status" value="1"/>
</dbReference>
<dbReference type="FunFam" id="3.90.1170.10:FF:000001">
    <property type="entry name" value="50S ribosomal protein L16"/>
    <property type="match status" value="1"/>
</dbReference>
<dbReference type="Gene3D" id="3.90.1170.10">
    <property type="entry name" value="Ribosomal protein L10e/L16"/>
    <property type="match status" value="1"/>
</dbReference>
<dbReference type="HAMAP" id="MF_01342">
    <property type="entry name" value="Ribosomal_uL16"/>
    <property type="match status" value="1"/>
</dbReference>
<dbReference type="InterPro" id="IPR047873">
    <property type="entry name" value="Ribosomal_uL16"/>
</dbReference>
<dbReference type="InterPro" id="IPR000114">
    <property type="entry name" value="Ribosomal_uL16_bact-type"/>
</dbReference>
<dbReference type="InterPro" id="IPR020798">
    <property type="entry name" value="Ribosomal_uL16_CS"/>
</dbReference>
<dbReference type="InterPro" id="IPR016180">
    <property type="entry name" value="Ribosomal_uL16_dom"/>
</dbReference>
<dbReference type="InterPro" id="IPR036920">
    <property type="entry name" value="Ribosomal_uL16_sf"/>
</dbReference>
<dbReference type="NCBIfam" id="TIGR01164">
    <property type="entry name" value="rplP_bact"/>
    <property type="match status" value="1"/>
</dbReference>
<dbReference type="PANTHER" id="PTHR12220">
    <property type="entry name" value="50S/60S RIBOSOMAL PROTEIN L16"/>
    <property type="match status" value="1"/>
</dbReference>
<dbReference type="PANTHER" id="PTHR12220:SF13">
    <property type="entry name" value="LARGE RIBOSOMAL SUBUNIT PROTEIN UL16M"/>
    <property type="match status" value="1"/>
</dbReference>
<dbReference type="Pfam" id="PF00252">
    <property type="entry name" value="Ribosomal_L16"/>
    <property type="match status" value="1"/>
</dbReference>
<dbReference type="PRINTS" id="PR00060">
    <property type="entry name" value="RIBOSOMALL16"/>
</dbReference>
<dbReference type="SUPFAM" id="SSF54686">
    <property type="entry name" value="Ribosomal protein L16p/L10e"/>
    <property type="match status" value="1"/>
</dbReference>
<dbReference type="PROSITE" id="PS00586">
    <property type="entry name" value="RIBOSOMAL_L16_1"/>
    <property type="match status" value="1"/>
</dbReference>
<dbReference type="PROSITE" id="PS00701">
    <property type="entry name" value="RIBOSOMAL_L16_2"/>
    <property type="match status" value="1"/>
</dbReference>
<keyword id="KW-0687">Ribonucleoprotein</keyword>
<keyword id="KW-0689">Ribosomal protein</keyword>
<keyword id="KW-0694">RNA-binding</keyword>
<keyword id="KW-0699">rRNA-binding</keyword>
<keyword id="KW-0820">tRNA-binding</keyword>
<gene>
    <name evidence="1" type="primary">rplP</name>
    <name type="ordered locus">SFV_3333</name>
</gene>
<proteinExistence type="inferred from homology"/>
<feature type="chain" id="PRO_1000054709" description="Large ribosomal subunit protein uL16">
    <location>
        <begin position="1"/>
        <end position="136"/>
    </location>
</feature>
<comment type="function">
    <text evidence="1">Binds 23S rRNA and is also seen to make contacts with the A and possibly P site tRNAs.</text>
</comment>
<comment type="subunit">
    <text evidence="1">Part of the 50S ribosomal subunit.</text>
</comment>
<comment type="similarity">
    <text evidence="1">Belongs to the universal ribosomal protein uL16 family.</text>
</comment>
<sequence>MLQPKRTKFRKMHKGRNRGLAQGTDVSFGSFGLKAVGRGRLTARQIEAARRAMTRAVKRQGKIWIRVFPDKPITEKPLAVRMGKGKGNVEYWVALIQPGKVLYEMDGVPEELAREAFKLAAAKLPIKTTFVTKTVM</sequence>
<organism>
    <name type="scientific">Shigella flexneri serotype 5b (strain 8401)</name>
    <dbReference type="NCBI Taxonomy" id="373384"/>
    <lineage>
        <taxon>Bacteria</taxon>
        <taxon>Pseudomonadati</taxon>
        <taxon>Pseudomonadota</taxon>
        <taxon>Gammaproteobacteria</taxon>
        <taxon>Enterobacterales</taxon>
        <taxon>Enterobacteriaceae</taxon>
        <taxon>Shigella</taxon>
    </lineage>
</organism>
<name>RL16_SHIF8</name>
<protein>
    <recommendedName>
        <fullName evidence="1">Large ribosomal subunit protein uL16</fullName>
    </recommendedName>
    <alternativeName>
        <fullName evidence="2">50S ribosomal protein L16</fullName>
    </alternativeName>
</protein>
<reference key="1">
    <citation type="journal article" date="2006" name="BMC Genomics">
        <title>Complete genome sequence of Shigella flexneri 5b and comparison with Shigella flexneri 2a.</title>
        <authorList>
            <person name="Nie H."/>
            <person name="Yang F."/>
            <person name="Zhang X."/>
            <person name="Yang J."/>
            <person name="Chen L."/>
            <person name="Wang J."/>
            <person name="Xiong Z."/>
            <person name="Peng J."/>
            <person name="Sun L."/>
            <person name="Dong J."/>
            <person name="Xue Y."/>
            <person name="Xu X."/>
            <person name="Chen S."/>
            <person name="Yao Z."/>
            <person name="Shen Y."/>
            <person name="Jin Q."/>
        </authorList>
    </citation>
    <scope>NUCLEOTIDE SEQUENCE [LARGE SCALE GENOMIC DNA]</scope>
    <source>
        <strain>8401</strain>
    </source>
</reference>